<gene>
    <name evidence="3" type="primary">REL2</name>
    <name evidence="6" type="ordered locus">LOC_Os10g41310</name>
    <name evidence="7" type="ordered locus">Os10g0562700</name>
    <name evidence="8" type="ORF">OsJ_32472</name>
    <name evidence="5" type="ORF">OSJNBb0089A17.4</name>
</gene>
<dbReference type="EMBL" id="AF268596">
    <property type="protein sequence ID" value="AAK01315.2"/>
    <property type="molecule type" value="mRNA"/>
</dbReference>
<dbReference type="EMBL" id="AY027588">
    <property type="protein sequence ID" value="AAK13058.1"/>
    <property type="molecule type" value="Genomic_DNA"/>
</dbReference>
<dbReference type="EMBL" id="AC079890">
    <property type="protein sequence ID" value="AAK31266.1"/>
    <property type="molecule type" value="Genomic_DNA"/>
</dbReference>
<dbReference type="EMBL" id="DP000086">
    <property type="protein sequence ID" value="AAP55028.1"/>
    <property type="molecule type" value="Genomic_DNA"/>
</dbReference>
<dbReference type="EMBL" id="AP008216">
    <property type="protein sequence ID" value="BAF27232.1"/>
    <property type="molecule type" value="Genomic_DNA"/>
</dbReference>
<dbReference type="EMBL" id="AP014966">
    <property type="protein sequence ID" value="BAT12075.1"/>
    <property type="molecule type" value="Genomic_DNA"/>
</dbReference>
<dbReference type="EMBL" id="CM000147">
    <property type="protein sequence ID" value="EAZ16987.1"/>
    <property type="molecule type" value="Genomic_DNA"/>
</dbReference>
<dbReference type="EMBL" id="AK243456">
    <property type="protein sequence ID" value="BAH01606.1"/>
    <property type="molecule type" value="mRNA"/>
</dbReference>
<dbReference type="FunCoup" id="Q9AQW1">
    <property type="interactions" value="1414"/>
</dbReference>
<dbReference type="IntAct" id="Q9AQW1">
    <property type="interactions" value="7"/>
</dbReference>
<dbReference type="STRING" id="39947.Q9AQW1"/>
<dbReference type="PaxDb" id="39947-Q9AQW1"/>
<dbReference type="EnsemblPlants" id="Os10t0562700-01">
    <property type="protein sequence ID" value="Os10t0562700-01"/>
    <property type="gene ID" value="Os10g0562700"/>
</dbReference>
<dbReference type="Gramene" id="Os10t0562700-01">
    <property type="protein sequence ID" value="Os10t0562700-01"/>
    <property type="gene ID" value="Os10g0562700"/>
</dbReference>
<dbReference type="KEGG" id="dosa:Os10g0562700"/>
<dbReference type="KEGG" id="osa:4349394"/>
<dbReference type="eggNOG" id="ENOG502QU01">
    <property type="taxonomic scope" value="Eukaryota"/>
</dbReference>
<dbReference type="HOGENOM" id="CLU_010985_5_0_1"/>
<dbReference type="InParanoid" id="Q9AQW1"/>
<dbReference type="OMA" id="FAFCDEW"/>
<dbReference type="OrthoDB" id="1919226at2759"/>
<dbReference type="Proteomes" id="UP000000763">
    <property type="component" value="Chromosome 10"/>
</dbReference>
<dbReference type="Proteomes" id="UP000007752">
    <property type="component" value="Chromosome 10"/>
</dbReference>
<dbReference type="Proteomes" id="UP000059680">
    <property type="component" value="Chromosome 10"/>
</dbReference>
<dbReference type="GO" id="GO:0005886">
    <property type="term" value="C:plasma membrane"/>
    <property type="evidence" value="ECO:0007669"/>
    <property type="project" value="UniProtKB-SubCell"/>
</dbReference>
<dbReference type="GO" id="GO:0030154">
    <property type="term" value="P:cell differentiation"/>
    <property type="evidence" value="ECO:0007669"/>
    <property type="project" value="UniProtKB-KW"/>
</dbReference>
<dbReference type="InterPro" id="IPR006868">
    <property type="entry name" value="DUF630"/>
</dbReference>
<dbReference type="InterPro" id="IPR006867">
    <property type="entry name" value="DUF632"/>
</dbReference>
<dbReference type="PANTHER" id="PTHR21450:SF9">
    <property type="entry name" value="BZIP DOMAIN CLASS TRANSCRIPTION FACTOR (DUF630 AND DUF632)-RELATED"/>
    <property type="match status" value="1"/>
</dbReference>
<dbReference type="PANTHER" id="PTHR21450">
    <property type="entry name" value="PROTEIN ALTERED PHOSPHATE STARVATION RESPONSE 1"/>
    <property type="match status" value="1"/>
</dbReference>
<dbReference type="Pfam" id="PF04783">
    <property type="entry name" value="DUF630"/>
    <property type="match status" value="1"/>
</dbReference>
<dbReference type="Pfam" id="PF04782">
    <property type="entry name" value="DUF632"/>
    <property type="match status" value="1"/>
</dbReference>
<accession>Q9AQW1</accession>
<accession>Q7EXK7</accession>
<accession>Q7XC46</accession>
<organism>
    <name type="scientific">Oryza sativa subsp. japonica</name>
    <name type="common">Rice</name>
    <dbReference type="NCBI Taxonomy" id="39947"/>
    <lineage>
        <taxon>Eukaryota</taxon>
        <taxon>Viridiplantae</taxon>
        <taxon>Streptophyta</taxon>
        <taxon>Embryophyta</taxon>
        <taxon>Tracheophyta</taxon>
        <taxon>Spermatophyta</taxon>
        <taxon>Magnoliopsida</taxon>
        <taxon>Liliopsida</taxon>
        <taxon>Poales</taxon>
        <taxon>Poaceae</taxon>
        <taxon>BOP clade</taxon>
        <taxon>Oryzoideae</taxon>
        <taxon>Oryzeae</taxon>
        <taxon>Oryzinae</taxon>
        <taxon>Oryza</taxon>
        <taxon>Oryza sativa</taxon>
    </lineage>
</organism>
<keyword id="KW-1003">Cell membrane</keyword>
<keyword id="KW-0217">Developmental protein</keyword>
<keyword id="KW-0221">Differentiation</keyword>
<keyword id="KW-0472">Membrane</keyword>
<keyword id="KW-1185">Reference proteome</keyword>
<comment type="function">
    <text evidence="2">Involved in the regulation of leaf shape formation (PubMed:27473144). May function by coordinating the expression of genes associated with leaf and bulliform cell development (PubMed:27473144).</text>
</comment>
<comment type="subcellular location">
    <subcellularLocation>
        <location evidence="2">Cell membrane</location>
        <topology evidence="4">Peripheral membrane protein</topology>
    </subcellularLocation>
</comment>
<comment type="tissue specificity">
    <text evidence="2">Highly expressed in young leaves and panicles (PubMed:27473144). Expressed at low levels in roots (PubMed:27473144).</text>
</comment>
<comment type="disruption phenotype">
    <text evidence="2">Adaxially rolling and erect leaves which leads to plants with erect architecture and reduced lamina joint angle (PubMed:27473144). Abnormal bulliform cell number, size and arrangement in leaf blades (PubMed:27473144). Dark-green leaves with increased levels of chlorophylls (PubMed:27473144). Reduced number of tillers, altered grain morphology, and reduced number of grains per main panicle (PubMed:27473144). Reduced number and length of adventitious roots (PubMed:27473144).</text>
</comment>
<protein>
    <recommendedName>
        <fullName evidence="3">Protein ROLLING AND ERECT LEAF 2</fullName>
    </recommendedName>
</protein>
<reference key="1">
    <citation type="submission" date="2001-02" db="EMBL/GenBank/DDBJ databases">
        <title>Cloning and characterization of a novel bZIP protein from rice ovule.</title>
        <authorList>
            <person name="Bi X."/>
            <person name="Fu B."/>
        </authorList>
    </citation>
    <scope>NUCLEOTIDE SEQUENCE [GENOMIC DNA / MRNA]</scope>
    <source>
        <tissue>Ovule</tissue>
    </source>
</reference>
<reference key="2">
    <citation type="journal article" date="2003" name="Science">
        <title>In-depth view of structure, activity, and evolution of rice chromosome 10.</title>
        <authorList>
            <person name="Yu Y."/>
            <person name="Rambo T."/>
            <person name="Currie J."/>
            <person name="Saski C."/>
            <person name="Kim H.-R."/>
            <person name="Collura K."/>
            <person name="Thompson S."/>
            <person name="Simmons J."/>
            <person name="Yang T.-J."/>
            <person name="Nah G."/>
            <person name="Patel A.J."/>
            <person name="Thurmond S."/>
            <person name="Henry D."/>
            <person name="Oates R."/>
            <person name="Palmer M."/>
            <person name="Pries G."/>
            <person name="Gibson J."/>
            <person name="Anderson H."/>
            <person name="Paradkar M."/>
            <person name="Crane L."/>
            <person name="Dale J."/>
            <person name="Carver M.B."/>
            <person name="Wood T."/>
            <person name="Frisch D."/>
            <person name="Engler F."/>
            <person name="Soderlund C."/>
            <person name="Palmer L.E."/>
            <person name="Teytelman L."/>
            <person name="Nascimento L."/>
            <person name="De la Bastide M."/>
            <person name="Spiegel L."/>
            <person name="Ware D."/>
            <person name="O'Shaughnessy A."/>
            <person name="Dike S."/>
            <person name="Dedhia N."/>
            <person name="Preston R."/>
            <person name="Huang E."/>
            <person name="Ferraro K."/>
            <person name="Kuit K."/>
            <person name="Miller B."/>
            <person name="Zutavern T."/>
            <person name="Katzenberger F."/>
            <person name="Muller S."/>
            <person name="Balija V."/>
            <person name="Martienssen R.A."/>
            <person name="Stein L."/>
            <person name="Minx P."/>
            <person name="Johnson D."/>
            <person name="Cordum H."/>
            <person name="Mardis E."/>
            <person name="Cheng Z."/>
            <person name="Jiang J."/>
            <person name="Wilson R."/>
            <person name="McCombie W.R."/>
            <person name="Wing R.A."/>
            <person name="Yuan Q."/>
            <person name="Ouyang S."/>
            <person name="Liu J."/>
            <person name="Jones K.M."/>
            <person name="Gansberger K."/>
            <person name="Moffat K."/>
            <person name="Hill J."/>
            <person name="Tsitrin T."/>
            <person name="Overton L."/>
            <person name="Bera J."/>
            <person name="Kim M."/>
            <person name="Jin S."/>
            <person name="Tallon L."/>
            <person name="Ciecko A."/>
            <person name="Pai G."/>
            <person name="Van Aken S."/>
            <person name="Utterback T."/>
            <person name="Reidmuller S."/>
            <person name="Bormann J."/>
            <person name="Feldblyum T."/>
            <person name="Hsiao J."/>
            <person name="Zismann V."/>
            <person name="Blunt S."/>
            <person name="de Vazeille A.R."/>
            <person name="Shaffer T."/>
            <person name="Koo H."/>
            <person name="Suh B."/>
            <person name="Yang Q."/>
            <person name="Haas B."/>
            <person name="Peterson J."/>
            <person name="Pertea M."/>
            <person name="Volfovsky N."/>
            <person name="Wortman J."/>
            <person name="White O."/>
            <person name="Salzberg S.L."/>
            <person name="Fraser C.M."/>
            <person name="Buell C.R."/>
            <person name="Messing J."/>
            <person name="Song R."/>
            <person name="Fuks G."/>
            <person name="Llaca V."/>
            <person name="Kovchak S."/>
            <person name="Young S."/>
            <person name="Bowers J.E."/>
            <person name="Paterson A.H."/>
            <person name="Johns M.A."/>
            <person name="Mao L."/>
            <person name="Pan H."/>
            <person name="Dean R.A."/>
        </authorList>
    </citation>
    <scope>NUCLEOTIDE SEQUENCE [LARGE SCALE GENOMIC DNA]</scope>
    <source>
        <strain>cv. Nipponbare</strain>
    </source>
</reference>
<reference key="3">
    <citation type="journal article" date="2005" name="Nature">
        <title>The map-based sequence of the rice genome.</title>
        <authorList>
            <consortium name="International rice genome sequencing project (IRGSP)"/>
        </authorList>
    </citation>
    <scope>NUCLEOTIDE SEQUENCE [LARGE SCALE GENOMIC DNA]</scope>
    <source>
        <strain>cv. Nipponbare</strain>
    </source>
</reference>
<reference key="4">
    <citation type="journal article" date="2008" name="Nucleic Acids Res.">
        <title>The rice annotation project database (RAP-DB): 2008 update.</title>
        <authorList>
            <consortium name="The rice annotation project (RAP)"/>
        </authorList>
    </citation>
    <scope>GENOME REANNOTATION</scope>
    <source>
        <strain>cv. Nipponbare</strain>
    </source>
</reference>
<reference key="5">
    <citation type="journal article" date="2013" name="Rice">
        <title>Improvement of the Oryza sativa Nipponbare reference genome using next generation sequence and optical map data.</title>
        <authorList>
            <person name="Kawahara Y."/>
            <person name="de la Bastide M."/>
            <person name="Hamilton J.P."/>
            <person name="Kanamori H."/>
            <person name="McCombie W.R."/>
            <person name="Ouyang S."/>
            <person name="Schwartz D.C."/>
            <person name="Tanaka T."/>
            <person name="Wu J."/>
            <person name="Zhou S."/>
            <person name="Childs K.L."/>
            <person name="Davidson R.M."/>
            <person name="Lin H."/>
            <person name="Quesada-Ocampo L."/>
            <person name="Vaillancourt B."/>
            <person name="Sakai H."/>
            <person name="Lee S.S."/>
            <person name="Kim J."/>
            <person name="Numa H."/>
            <person name="Itoh T."/>
            <person name="Buell C.R."/>
            <person name="Matsumoto T."/>
        </authorList>
    </citation>
    <scope>GENOME REANNOTATION</scope>
    <source>
        <strain>cv. Nipponbare</strain>
    </source>
</reference>
<reference key="6">
    <citation type="journal article" date="2005" name="PLoS Biol.">
        <title>The genomes of Oryza sativa: a history of duplications.</title>
        <authorList>
            <person name="Yu J."/>
            <person name="Wang J."/>
            <person name="Lin W."/>
            <person name="Li S."/>
            <person name="Li H."/>
            <person name="Zhou J."/>
            <person name="Ni P."/>
            <person name="Dong W."/>
            <person name="Hu S."/>
            <person name="Zeng C."/>
            <person name="Zhang J."/>
            <person name="Zhang Y."/>
            <person name="Li R."/>
            <person name="Xu Z."/>
            <person name="Li S."/>
            <person name="Li X."/>
            <person name="Zheng H."/>
            <person name="Cong L."/>
            <person name="Lin L."/>
            <person name="Yin J."/>
            <person name="Geng J."/>
            <person name="Li G."/>
            <person name="Shi J."/>
            <person name="Liu J."/>
            <person name="Lv H."/>
            <person name="Li J."/>
            <person name="Wang J."/>
            <person name="Deng Y."/>
            <person name="Ran L."/>
            <person name="Shi X."/>
            <person name="Wang X."/>
            <person name="Wu Q."/>
            <person name="Li C."/>
            <person name="Ren X."/>
            <person name="Wang J."/>
            <person name="Wang X."/>
            <person name="Li D."/>
            <person name="Liu D."/>
            <person name="Zhang X."/>
            <person name="Ji Z."/>
            <person name="Zhao W."/>
            <person name="Sun Y."/>
            <person name="Zhang Z."/>
            <person name="Bao J."/>
            <person name="Han Y."/>
            <person name="Dong L."/>
            <person name="Ji J."/>
            <person name="Chen P."/>
            <person name="Wu S."/>
            <person name="Liu J."/>
            <person name="Xiao Y."/>
            <person name="Bu D."/>
            <person name="Tan J."/>
            <person name="Yang L."/>
            <person name="Ye C."/>
            <person name="Zhang J."/>
            <person name="Xu J."/>
            <person name="Zhou Y."/>
            <person name="Yu Y."/>
            <person name="Zhang B."/>
            <person name="Zhuang S."/>
            <person name="Wei H."/>
            <person name="Liu B."/>
            <person name="Lei M."/>
            <person name="Yu H."/>
            <person name="Li Y."/>
            <person name="Xu H."/>
            <person name="Wei S."/>
            <person name="He X."/>
            <person name="Fang L."/>
            <person name="Zhang Z."/>
            <person name="Zhang Y."/>
            <person name="Huang X."/>
            <person name="Su Z."/>
            <person name="Tong W."/>
            <person name="Li J."/>
            <person name="Tong Z."/>
            <person name="Li S."/>
            <person name="Ye J."/>
            <person name="Wang L."/>
            <person name="Fang L."/>
            <person name="Lei T."/>
            <person name="Chen C.-S."/>
            <person name="Chen H.-C."/>
            <person name="Xu Z."/>
            <person name="Li H."/>
            <person name="Huang H."/>
            <person name="Zhang F."/>
            <person name="Xu H."/>
            <person name="Li N."/>
            <person name="Zhao C."/>
            <person name="Li S."/>
            <person name="Dong L."/>
            <person name="Huang Y."/>
            <person name="Li L."/>
            <person name="Xi Y."/>
            <person name="Qi Q."/>
            <person name="Li W."/>
            <person name="Zhang B."/>
            <person name="Hu W."/>
            <person name="Zhang Y."/>
            <person name="Tian X."/>
            <person name="Jiao Y."/>
            <person name="Liang X."/>
            <person name="Jin J."/>
            <person name="Gao L."/>
            <person name="Zheng W."/>
            <person name="Hao B."/>
            <person name="Liu S.-M."/>
            <person name="Wang W."/>
            <person name="Yuan L."/>
            <person name="Cao M."/>
            <person name="McDermott J."/>
            <person name="Samudrala R."/>
            <person name="Wang J."/>
            <person name="Wong G.K.-S."/>
            <person name="Yang H."/>
        </authorList>
    </citation>
    <scope>NUCLEOTIDE SEQUENCE [LARGE SCALE GENOMIC DNA]</scope>
    <source>
        <strain>cv. Nipponbare</strain>
    </source>
</reference>
<reference key="7">
    <citation type="submission" date="2006-10" db="EMBL/GenBank/DDBJ databases">
        <title>Oryza sativa full length cDNA.</title>
        <authorList>
            <consortium name="The rice full-length cDNA consortium"/>
        </authorList>
    </citation>
    <scope>NUCLEOTIDE SEQUENCE [LARGE SCALE MRNA]</scope>
    <source>
        <strain>cv. Nipponbare</strain>
    </source>
</reference>
<reference key="8">
    <citation type="journal article" date="2016" name="Rice">
        <title>REL2, A Gene Encoding An Unknown Function Protein which Contains DUF630 and DUF632 Domains Controls Leaf Rolling in Rice.</title>
        <authorList>
            <person name="Yang S.Q."/>
            <person name="Li W.Q."/>
            <person name="Miao H."/>
            <person name="Gan P.F."/>
            <person name="Qiao L."/>
            <person name="Chang Y.L."/>
            <person name="Shi C.H."/>
            <person name="Chen K.M."/>
        </authorList>
    </citation>
    <scope>FUNCTION</scope>
    <scope>SUBCELLULAR LOCATION</scope>
    <scope>TISSUE SPECIFICITY</scope>
    <scope>DISRUPTION PHENOTYPE</scope>
</reference>
<name>REL2_ORYSJ</name>
<sequence>MGCTASKVEQEDTVRRCKERRRHMKEAVASRQQLASAHADYLRSLRLTAAALSRFAQGHPSLAVSHHTAPVLLTTAAPALAPTPTPPPPSSTASSSLPPPTPLLPKHQQAPPPPPPTQSHQPPPPVAVRAPRGGPRRLKVPHILSDSSVASPARSSFRKPVVGTPSSSSAWDWENFYPPSPPDSEFFDRRKADLEEANRLRELEEEEKARGYLHPHHLKEEDEVDDDDDEREEEMHCGGWEDDDDHYASTTTSETRSEEGEMGNRSECGFAARSEYGGTAPSEYAAAPLPLPLRRRDERSEAGDSSSTVTAAAEMRMVIRHRTLAEIVAAIEEYFVKAAEAGNGVSELLEASRAQLDRNFRQLKKTVYHSNSLLSSLSSTWTSKPPLAVRYKLDTNALEMESMEGKSHGSTLERLLAWEKKLYQEVKARESVKIEHEKKLSTLQSLEYRGRDSTKLDKTKASINKLQSLIIVTSQAATTTSSAIVRVRDNELAPQLVELCFALLSMWRSMNHFHEIQNEIVQQVRGLVDNSMAESTSDLHRLATRDLEAAVSAWHSNFNRLIKYQRDYIRALYGWLKLTLFQVDSNIPQEAYTSLISRELTTFCDEWKQALDRLPDASASEAIKSFVNVVHVIYTKQAEEMKIKKRTETYSKELEKKTNSLRAIEKKYYQSYSMVGLGLPGSGRDGIESHSFDARDPLAEKKTEIAQCRRKVEDEMTRHAKAVEVTRSMTLNNIQTGLPGMFQAIAGFSGTVVEALDVVCRRAGSVR</sequence>
<proteinExistence type="evidence at transcript level"/>
<feature type="chain" id="PRO_0000448356" description="Protein ROLLING AND ERECT LEAF 2">
    <location>
        <begin position="1"/>
        <end position="767"/>
    </location>
</feature>
<feature type="region of interest" description="Disordered" evidence="1">
    <location>
        <begin position="1"/>
        <end position="20"/>
    </location>
</feature>
<feature type="region of interest" description="Disordered" evidence="1">
    <location>
        <begin position="78"/>
        <end position="187"/>
    </location>
</feature>
<feature type="region of interest" description="Disordered" evidence="1">
    <location>
        <begin position="201"/>
        <end position="309"/>
    </location>
</feature>
<feature type="compositionally biased region" description="Pro residues" evidence="1">
    <location>
        <begin position="81"/>
        <end position="90"/>
    </location>
</feature>
<feature type="compositionally biased region" description="Pro residues" evidence="1">
    <location>
        <begin position="110"/>
        <end position="126"/>
    </location>
</feature>
<feature type="compositionally biased region" description="Low complexity" evidence="1">
    <location>
        <begin position="145"/>
        <end position="155"/>
    </location>
</feature>
<feature type="compositionally biased region" description="Basic and acidic residues" evidence="1">
    <location>
        <begin position="201"/>
        <end position="210"/>
    </location>
</feature>
<feature type="compositionally biased region" description="Acidic residues" evidence="1">
    <location>
        <begin position="221"/>
        <end position="232"/>
    </location>
</feature>
<feature type="compositionally biased region" description="Basic and acidic residues" evidence="1">
    <location>
        <begin position="255"/>
        <end position="264"/>
    </location>
</feature>
<evidence type="ECO:0000256" key="1">
    <source>
        <dbReference type="SAM" id="MobiDB-lite"/>
    </source>
</evidence>
<evidence type="ECO:0000269" key="2">
    <source>
    </source>
</evidence>
<evidence type="ECO:0000303" key="3">
    <source>
    </source>
</evidence>
<evidence type="ECO:0000305" key="4"/>
<evidence type="ECO:0000312" key="5">
    <source>
        <dbReference type="EMBL" id="AAK31266.1"/>
    </source>
</evidence>
<evidence type="ECO:0000312" key="6">
    <source>
        <dbReference type="EMBL" id="AAP55028.1"/>
    </source>
</evidence>
<evidence type="ECO:0000312" key="7">
    <source>
        <dbReference type="EMBL" id="BAF27232.1"/>
    </source>
</evidence>
<evidence type="ECO:0000312" key="8">
    <source>
        <dbReference type="EMBL" id="EAZ16987.1"/>
    </source>
</evidence>